<reference key="1">
    <citation type="journal article" date="2005" name="Nucleic Acids Res.">
        <title>Genome dynamics and diversity of Shigella species, the etiologic agents of bacillary dysentery.</title>
        <authorList>
            <person name="Yang F."/>
            <person name="Yang J."/>
            <person name="Zhang X."/>
            <person name="Chen L."/>
            <person name="Jiang Y."/>
            <person name="Yan Y."/>
            <person name="Tang X."/>
            <person name="Wang J."/>
            <person name="Xiong Z."/>
            <person name="Dong J."/>
            <person name="Xue Y."/>
            <person name="Zhu Y."/>
            <person name="Xu X."/>
            <person name="Sun L."/>
            <person name="Chen S."/>
            <person name="Nie H."/>
            <person name="Peng J."/>
            <person name="Xu J."/>
            <person name="Wang Y."/>
            <person name="Yuan Z."/>
            <person name="Wen Y."/>
            <person name="Yao Z."/>
            <person name="Shen Y."/>
            <person name="Qiang B."/>
            <person name="Hou Y."/>
            <person name="Yu J."/>
            <person name="Jin Q."/>
        </authorList>
    </citation>
    <scope>NUCLEOTIDE SEQUENCE [LARGE SCALE GENOMIC DNA]</scope>
    <source>
        <strain>Sd197</strain>
    </source>
</reference>
<dbReference type="EC" id="2.1.1.200" evidence="1"/>
<dbReference type="EMBL" id="CP000034">
    <property type="protein sequence ID" value="ABB62773.1"/>
    <property type="molecule type" value="Genomic_DNA"/>
</dbReference>
<dbReference type="RefSeq" id="WP_000940018.1">
    <property type="nucleotide sequence ID" value="NC_007606.1"/>
</dbReference>
<dbReference type="RefSeq" id="YP_404264.1">
    <property type="nucleotide sequence ID" value="NC_007606.1"/>
</dbReference>
<dbReference type="SMR" id="Q32D32"/>
<dbReference type="STRING" id="300267.SDY_2728"/>
<dbReference type="EnsemblBacteria" id="ABB62773">
    <property type="protein sequence ID" value="ABB62773"/>
    <property type="gene ID" value="SDY_2728"/>
</dbReference>
<dbReference type="GeneID" id="93774604"/>
<dbReference type="KEGG" id="sdy:SDY_2728"/>
<dbReference type="PATRIC" id="fig|300267.13.peg.3290"/>
<dbReference type="HOGENOM" id="CLU_056931_0_1_6"/>
<dbReference type="Proteomes" id="UP000002716">
    <property type="component" value="Chromosome"/>
</dbReference>
<dbReference type="GO" id="GO:0005829">
    <property type="term" value="C:cytosol"/>
    <property type="evidence" value="ECO:0007669"/>
    <property type="project" value="TreeGrafter"/>
</dbReference>
<dbReference type="GO" id="GO:0003723">
    <property type="term" value="F:RNA binding"/>
    <property type="evidence" value="ECO:0007669"/>
    <property type="project" value="InterPro"/>
</dbReference>
<dbReference type="GO" id="GO:0160206">
    <property type="term" value="F:tRNA (cytidine(32)/uridine(32)-2'-O)-methyltransferase activity"/>
    <property type="evidence" value="ECO:0007669"/>
    <property type="project" value="UniProtKB-EC"/>
</dbReference>
<dbReference type="GO" id="GO:0002128">
    <property type="term" value="P:tRNA nucleoside ribose methylation"/>
    <property type="evidence" value="ECO:0007669"/>
    <property type="project" value="TreeGrafter"/>
</dbReference>
<dbReference type="CDD" id="cd18093">
    <property type="entry name" value="SpoU-like_TrmJ"/>
    <property type="match status" value="1"/>
</dbReference>
<dbReference type="FunFam" id="1.10.8.590:FF:000001">
    <property type="entry name" value="tRNA:Cm32/Um32 methyltransferase"/>
    <property type="match status" value="1"/>
</dbReference>
<dbReference type="FunFam" id="3.40.1280.10:FF:000006">
    <property type="entry name" value="Uncharacterized tRNA/rRNA methyltransferase HI_0380"/>
    <property type="match status" value="1"/>
</dbReference>
<dbReference type="Gene3D" id="1.10.8.590">
    <property type="match status" value="1"/>
</dbReference>
<dbReference type="Gene3D" id="3.40.1280.10">
    <property type="match status" value="1"/>
</dbReference>
<dbReference type="InterPro" id="IPR029028">
    <property type="entry name" value="Alpha/beta_knot_MTases"/>
</dbReference>
<dbReference type="InterPro" id="IPR004384">
    <property type="entry name" value="RNA_MeTrfase_TrmJ/LasT"/>
</dbReference>
<dbReference type="InterPro" id="IPR001537">
    <property type="entry name" value="SpoU_MeTrfase"/>
</dbReference>
<dbReference type="InterPro" id="IPR029026">
    <property type="entry name" value="tRNA_m1G_MTases_N"/>
</dbReference>
<dbReference type="NCBIfam" id="NF011694">
    <property type="entry name" value="PRK15114.1"/>
    <property type="match status" value="1"/>
</dbReference>
<dbReference type="NCBIfam" id="TIGR00050">
    <property type="entry name" value="rRNA_methyl_1"/>
    <property type="match status" value="1"/>
</dbReference>
<dbReference type="PANTHER" id="PTHR42786:SF2">
    <property type="entry name" value="TRNA (CYTIDINE_URIDINE-2'-O-)-METHYLTRANSFERASE TRMJ"/>
    <property type="match status" value="1"/>
</dbReference>
<dbReference type="PANTHER" id="PTHR42786">
    <property type="entry name" value="TRNA/RRNA METHYLTRANSFERASE"/>
    <property type="match status" value="1"/>
</dbReference>
<dbReference type="Pfam" id="PF00588">
    <property type="entry name" value="SpoU_methylase"/>
    <property type="match status" value="1"/>
</dbReference>
<dbReference type="PIRSF" id="PIRSF004808">
    <property type="entry name" value="LasT"/>
    <property type="match status" value="1"/>
</dbReference>
<dbReference type="SUPFAM" id="SSF75217">
    <property type="entry name" value="alpha/beta knot"/>
    <property type="match status" value="1"/>
</dbReference>
<feature type="chain" id="PRO_0000313862" description="tRNA (cytidine/uridine-2'-O-)-methyltransferase TrmJ">
    <location>
        <begin position="1"/>
        <end position="245"/>
    </location>
</feature>
<feature type="binding site" evidence="1">
    <location>
        <begin position="79"/>
        <end position="81"/>
    </location>
    <ligand>
        <name>S-adenosyl-L-methionine</name>
        <dbReference type="ChEBI" id="CHEBI:59789"/>
    </ligand>
</feature>
<feature type="binding site" evidence="1">
    <location>
        <position position="114"/>
    </location>
    <ligand>
        <name>S-adenosyl-L-methionine</name>
        <dbReference type="ChEBI" id="CHEBI:59789"/>
    </ligand>
</feature>
<feature type="binding site" evidence="1">
    <location>
        <position position="134"/>
    </location>
    <ligand>
        <name>S-adenosyl-L-methionine</name>
        <dbReference type="ChEBI" id="CHEBI:59789"/>
    </ligand>
</feature>
<feature type="binding site" evidence="1">
    <location>
        <begin position="141"/>
        <end position="143"/>
    </location>
    <ligand>
        <name>S-adenosyl-L-methionine</name>
        <dbReference type="ChEBI" id="CHEBI:59789"/>
    </ligand>
</feature>
<proteinExistence type="inferred from homology"/>
<keyword id="KW-0963">Cytoplasm</keyword>
<keyword id="KW-0489">Methyltransferase</keyword>
<keyword id="KW-1185">Reference proteome</keyword>
<keyword id="KW-0949">S-adenosyl-L-methionine</keyword>
<keyword id="KW-0808">Transferase</keyword>
<keyword id="KW-0819">tRNA processing</keyword>
<gene>
    <name type="primary">trmJ</name>
    <name type="ordered locus">SDY_2728</name>
</gene>
<name>TRMJ_SHIDS</name>
<accession>Q32D32</accession>
<protein>
    <recommendedName>
        <fullName evidence="1">tRNA (cytidine/uridine-2'-O-)-methyltransferase TrmJ</fullName>
        <ecNumber evidence="1">2.1.1.200</ecNumber>
    </recommendedName>
    <alternativeName>
        <fullName evidence="1">tRNA (cytidine(32)/uridine(32)-2'-O)-methyltransferase</fullName>
    </alternativeName>
    <alternativeName>
        <fullName evidence="1">tRNA Cm32/Um32 methyltransferase</fullName>
    </alternativeName>
</protein>
<evidence type="ECO:0000250" key="1">
    <source>
        <dbReference type="UniProtKB" id="P0AE01"/>
    </source>
</evidence>
<evidence type="ECO:0000305" key="2"/>
<organism>
    <name type="scientific">Shigella dysenteriae serotype 1 (strain Sd197)</name>
    <dbReference type="NCBI Taxonomy" id="300267"/>
    <lineage>
        <taxon>Bacteria</taxon>
        <taxon>Pseudomonadati</taxon>
        <taxon>Pseudomonadota</taxon>
        <taxon>Gammaproteobacteria</taxon>
        <taxon>Enterobacterales</taxon>
        <taxon>Enterobacteriaceae</taxon>
        <taxon>Shigella</taxon>
    </lineage>
</organism>
<sequence>MLQNIRIVLVETSHTGNMGSVARAMKTMGLTNLWLVNPLVKPDSQAIALAAGASDVIGNAHIVDTLDEALAGCSLVVGTSARSRTLPWPMLDPRECGLKSVAEAANTPVALVFGRERVGLTNEELQKCHYHVAIAANPEYSSLNLAMAVQVIAYEVRMAWLATQENGEQVEHEETPYPLVDDLERFYGHLEQTLLATGFIRENHPGQVMNKLRRLFTRARPESQELNILRGILASIEQQNKGNKA</sequence>
<comment type="function">
    <text evidence="1">Catalyzes the formation of 2'O-methylated cytidine (Cm32) or 2'O-methylated uridine (Um32) at position 32 in tRNA.</text>
</comment>
<comment type="catalytic activity">
    <reaction evidence="1">
        <text>cytidine(32) in tRNA + S-adenosyl-L-methionine = 2'-O-methylcytidine(32) in tRNA + S-adenosyl-L-homocysteine + H(+)</text>
        <dbReference type="Rhea" id="RHEA:42932"/>
        <dbReference type="Rhea" id="RHEA-COMP:10288"/>
        <dbReference type="Rhea" id="RHEA-COMP:10289"/>
        <dbReference type="ChEBI" id="CHEBI:15378"/>
        <dbReference type="ChEBI" id="CHEBI:57856"/>
        <dbReference type="ChEBI" id="CHEBI:59789"/>
        <dbReference type="ChEBI" id="CHEBI:74495"/>
        <dbReference type="ChEBI" id="CHEBI:82748"/>
        <dbReference type="EC" id="2.1.1.200"/>
    </reaction>
</comment>
<comment type="catalytic activity">
    <reaction evidence="1">
        <text>uridine(32) in tRNA + S-adenosyl-L-methionine = 2'-O-methyluridine(32) in tRNA + S-adenosyl-L-homocysteine + H(+)</text>
        <dbReference type="Rhea" id="RHEA:42936"/>
        <dbReference type="Rhea" id="RHEA-COMP:10107"/>
        <dbReference type="Rhea" id="RHEA-COMP:10290"/>
        <dbReference type="ChEBI" id="CHEBI:15378"/>
        <dbReference type="ChEBI" id="CHEBI:57856"/>
        <dbReference type="ChEBI" id="CHEBI:59789"/>
        <dbReference type="ChEBI" id="CHEBI:65315"/>
        <dbReference type="ChEBI" id="CHEBI:74478"/>
        <dbReference type="EC" id="2.1.1.200"/>
    </reaction>
</comment>
<comment type="subunit">
    <text evidence="1">Homodimer.</text>
</comment>
<comment type="subcellular location">
    <subcellularLocation>
        <location evidence="1">Cytoplasm</location>
    </subcellularLocation>
</comment>
<comment type="similarity">
    <text evidence="2">Belongs to the class IV-like SAM-binding methyltransferase superfamily. RNA methyltransferase TrmH family.</text>
</comment>